<feature type="chain" id="PRO_0000082341" description="Taste receptor type 2 member 50">
    <location>
        <begin position="1"/>
        <end position="299"/>
    </location>
</feature>
<feature type="topological domain" description="Extracellular" evidence="2">
    <location>
        <position position="1"/>
    </location>
</feature>
<feature type="transmembrane region" description="Helical; Name=1" evidence="2">
    <location>
        <begin position="2"/>
        <end position="22"/>
    </location>
</feature>
<feature type="topological domain" description="Cytoplasmic" evidence="2">
    <location>
        <begin position="23"/>
        <end position="55"/>
    </location>
</feature>
<feature type="transmembrane region" description="Helical; Name=2" evidence="2">
    <location>
        <begin position="56"/>
        <end position="76"/>
    </location>
</feature>
<feature type="topological domain" description="Extracellular" evidence="2">
    <location>
        <begin position="77"/>
        <end position="87"/>
    </location>
</feature>
<feature type="transmembrane region" description="Helical; Name=3" evidence="2">
    <location>
        <begin position="88"/>
        <end position="108"/>
    </location>
</feature>
<feature type="topological domain" description="Cytoplasmic" evidence="2">
    <location>
        <begin position="109"/>
        <end position="126"/>
    </location>
</feature>
<feature type="transmembrane region" description="Helical; Name=4" evidence="2">
    <location>
        <begin position="127"/>
        <end position="147"/>
    </location>
</feature>
<feature type="topological domain" description="Extracellular" evidence="2">
    <location>
        <begin position="148"/>
        <end position="181"/>
    </location>
</feature>
<feature type="transmembrane region" description="Helical; Name=5" evidence="2">
    <location>
        <begin position="182"/>
        <end position="202"/>
    </location>
</feature>
<feature type="topological domain" description="Cytoplasmic" evidence="2">
    <location>
        <begin position="203"/>
        <end position="229"/>
    </location>
</feature>
<feature type="transmembrane region" description="Helical; Name=6" evidence="2">
    <location>
        <begin position="230"/>
        <end position="250"/>
    </location>
</feature>
<feature type="topological domain" description="Extracellular" evidence="2">
    <location>
        <begin position="251"/>
        <end position="259"/>
    </location>
</feature>
<feature type="transmembrane region" description="Helical; Name=7" evidence="2">
    <location>
        <begin position="260"/>
        <end position="280"/>
    </location>
</feature>
<feature type="topological domain" description="Cytoplasmic" evidence="2">
    <location>
        <begin position="281"/>
        <end position="299"/>
    </location>
</feature>
<feature type="glycosylation site" description="N-linked (GlcNAc...) asparagine" evidence="2">
    <location>
        <position position="161"/>
    </location>
</feature>
<reference key="1">
    <citation type="journal article" date="2005" name="Mol. Biol. Evol.">
        <title>Evolution of bitter taste receptors in humans and apes.</title>
        <authorList>
            <person name="Fischer A."/>
            <person name="Gilad Y."/>
            <person name="Man O."/>
            <person name="Paeaebo S."/>
        </authorList>
    </citation>
    <scope>NUCLEOTIDE SEQUENCE [GENOMIC DNA]</scope>
</reference>
<evidence type="ECO:0000250" key="1"/>
<evidence type="ECO:0000255" key="2"/>
<evidence type="ECO:0000305" key="3"/>
<proteinExistence type="inferred from homology"/>
<protein>
    <recommendedName>
        <fullName>Taste receptor type 2 member 50</fullName>
        <shortName>T2R50</shortName>
    </recommendedName>
</protein>
<accession>Q646G2</accession>
<name>T2R50_PAPHA</name>
<sequence>MIPFLHIFFSVLILVLFVLGNFANGFIALVNFIDWVKRKKISLADQILTALAVSRVGLLWALLLNWYLTELNPAFYSVELRITSYNAWVVTNHFSMWLAASLSIFYLLKIANFSNLSFLNLKRRVRSIILVILLGSLLFLVCHLLAVNMDENMWTEEYEGNMTGKMKLRNAAHLSYMTVTTLWSFIPFMLSLISFLMLIFSLCKHLKKMQLHGEGSRDPSTTVHIKALQTLISFLLLCAIFFLFLIISVWSPRRLQNEPVFMVCKAVGNIYLSFDSFVLIWRTKKLKHIFLLILCQIRC</sequence>
<keyword id="KW-0297">G-protein coupled receptor</keyword>
<keyword id="KW-0325">Glycoprotein</keyword>
<keyword id="KW-0472">Membrane</keyword>
<keyword id="KW-0675">Receptor</keyword>
<keyword id="KW-0716">Sensory transduction</keyword>
<keyword id="KW-0919">Taste</keyword>
<keyword id="KW-0807">Transducer</keyword>
<keyword id="KW-0812">Transmembrane</keyword>
<keyword id="KW-1133">Transmembrane helix</keyword>
<gene>
    <name type="primary">TAS2R50</name>
</gene>
<dbReference type="EMBL" id="AY724819">
    <property type="protein sequence ID" value="AAU21057.1"/>
    <property type="molecule type" value="Genomic_DNA"/>
</dbReference>
<dbReference type="SMR" id="Q646G2"/>
<dbReference type="GlyCosmos" id="Q646G2">
    <property type="glycosylation" value="1 site, No reported glycans"/>
</dbReference>
<dbReference type="GO" id="GO:0005886">
    <property type="term" value="C:plasma membrane"/>
    <property type="evidence" value="ECO:0007669"/>
    <property type="project" value="UniProtKB-ARBA"/>
</dbReference>
<dbReference type="GO" id="GO:0033038">
    <property type="term" value="F:bitter taste receptor activity"/>
    <property type="evidence" value="ECO:0007669"/>
    <property type="project" value="InterPro"/>
</dbReference>
<dbReference type="GO" id="GO:0004930">
    <property type="term" value="F:G protein-coupled receptor activity"/>
    <property type="evidence" value="ECO:0007669"/>
    <property type="project" value="UniProtKB-KW"/>
</dbReference>
<dbReference type="CDD" id="cd15027">
    <property type="entry name" value="7tm_TAS2R43-like"/>
    <property type="match status" value="1"/>
</dbReference>
<dbReference type="FunFam" id="1.20.1070.10:FF:000042">
    <property type="entry name" value="Taste receptor type 2 member 7"/>
    <property type="match status" value="1"/>
</dbReference>
<dbReference type="Gene3D" id="1.20.1070.10">
    <property type="entry name" value="Rhodopsin 7-helix transmembrane proteins"/>
    <property type="match status" value="1"/>
</dbReference>
<dbReference type="InterPro" id="IPR007960">
    <property type="entry name" value="TAS2R"/>
</dbReference>
<dbReference type="PANTHER" id="PTHR11394">
    <property type="entry name" value="TASTE RECEPTOR TYPE 2"/>
    <property type="match status" value="1"/>
</dbReference>
<dbReference type="PANTHER" id="PTHR11394:SF43">
    <property type="entry name" value="TASTE RECEPTOR TYPE 2 MEMBER 50"/>
    <property type="match status" value="1"/>
</dbReference>
<dbReference type="Pfam" id="PF05296">
    <property type="entry name" value="TAS2R"/>
    <property type="match status" value="1"/>
</dbReference>
<dbReference type="SUPFAM" id="SSF81321">
    <property type="entry name" value="Family A G protein-coupled receptor-like"/>
    <property type="match status" value="1"/>
</dbReference>
<comment type="function">
    <text evidence="1">Receptor that may play a role in the perception of bitterness and is gustducin-linked. May play a role in sensing the chemical composition of the gastrointestinal content. The activity of this receptor may stimulate alpha gustducin, mediate PLC-beta-2 activation and lead to the gating of TRPM5 (By similarity).</text>
</comment>
<comment type="subcellular location">
    <subcellularLocation>
        <location>Membrane</location>
        <topology>Multi-pass membrane protein</topology>
    </subcellularLocation>
</comment>
<comment type="miscellaneous">
    <text>Most taste cells may be activated by a limited number of bitter compounds; individual taste cells can discriminate among bitter stimuli.</text>
</comment>
<comment type="similarity">
    <text evidence="3">Belongs to the G-protein coupled receptor T2R family.</text>
</comment>
<organism>
    <name type="scientific">Papio hamadryas</name>
    <name type="common">Hamadryas baboon</name>
    <dbReference type="NCBI Taxonomy" id="9557"/>
    <lineage>
        <taxon>Eukaryota</taxon>
        <taxon>Metazoa</taxon>
        <taxon>Chordata</taxon>
        <taxon>Craniata</taxon>
        <taxon>Vertebrata</taxon>
        <taxon>Euteleostomi</taxon>
        <taxon>Mammalia</taxon>
        <taxon>Eutheria</taxon>
        <taxon>Euarchontoglires</taxon>
        <taxon>Primates</taxon>
        <taxon>Haplorrhini</taxon>
        <taxon>Catarrhini</taxon>
        <taxon>Cercopithecidae</taxon>
        <taxon>Cercopithecinae</taxon>
        <taxon>Papio</taxon>
    </lineage>
</organism>